<sequence>MIQDILHRYLFDNADVRGELVQLQDSYQQVIGSHAYPPVLQILLGELLAATSLLTATLKFSGDISVQLQGNGPVSLAVINGSNQQQLRGIARWDGELADDASLADLFGQGYMVITLTPDEGERYQGVVALDKPTLAACVEDYFNQSEQLPTALWLFADGKQAAGMFLQVLPSQEDHNADFEHLCQLTATIKAEELFTLEAQEVLHRLYHQEDVRLFDPIEVCFKCTCSRERSAAAIKTIDQAEVEAILAEDGKVEMGCEYCNAKYVFDGIDIAAIYANGTASNTQQ</sequence>
<proteinExistence type="inferred from homology"/>
<organism>
    <name type="scientific">Shewanella sp. (strain MR-4)</name>
    <dbReference type="NCBI Taxonomy" id="60480"/>
    <lineage>
        <taxon>Bacteria</taxon>
        <taxon>Pseudomonadati</taxon>
        <taxon>Pseudomonadota</taxon>
        <taxon>Gammaproteobacteria</taxon>
        <taxon>Alteromonadales</taxon>
        <taxon>Shewanellaceae</taxon>
        <taxon>Shewanella</taxon>
    </lineage>
</organism>
<protein>
    <recommendedName>
        <fullName evidence="1">33 kDa chaperonin</fullName>
    </recommendedName>
    <alternativeName>
        <fullName evidence="1">Heat shock protein 33 homolog</fullName>
        <shortName evidence="1">HSP33</shortName>
    </alternativeName>
</protein>
<comment type="function">
    <text evidence="1">Redox regulated molecular chaperone. Protects both thermally unfolding and oxidatively damaged proteins from irreversible aggregation. Plays an important role in the bacterial defense system toward oxidative stress.</text>
</comment>
<comment type="subcellular location">
    <subcellularLocation>
        <location evidence="1">Cytoplasm</location>
    </subcellularLocation>
</comment>
<comment type="PTM">
    <text evidence="1">Under oxidizing conditions two disulfide bonds are formed involving the reactive cysteines. Under reducing conditions zinc is bound to the reactive cysteines and the protein is inactive.</text>
</comment>
<comment type="similarity">
    <text evidence="1">Belongs to the HSP33 family.</text>
</comment>
<reference key="1">
    <citation type="submission" date="2006-08" db="EMBL/GenBank/DDBJ databases">
        <title>Complete sequence of Shewanella sp. MR-4.</title>
        <authorList>
            <consortium name="US DOE Joint Genome Institute"/>
            <person name="Copeland A."/>
            <person name="Lucas S."/>
            <person name="Lapidus A."/>
            <person name="Barry K."/>
            <person name="Detter J.C."/>
            <person name="Glavina del Rio T."/>
            <person name="Hammon N."/>
            <person name="Israni S."/>
            <person name="Dalin E."/>
            <person name="Tice H."/>
            <person name="Pitluck S."/>
            <person name="Kiss H."/>
            <person name="Brettin T."/>
            <person name="Bruce D."/>
            <person name="Han C."/>
            <person name="Tapia R."/>
            <person name="Gilna P."/>
            <person name="Schmutz J."/>
            <person name="Larimer F."/>
            <person name="Land M."/>
            <person name="Hauser L."/>
            <person name="Kyrpides N."/>
            <person name="Mikhailova N."/>
            <person name="Nealson K."/>
            <person name="Konstantinidis K."/>
            <person name="Klappenbach J."/>
            <person name="Tiedje J."/>
            <person name="Richardson P."/>
        </authorList>
    </citation>
    <scope>NUCLEOTIDE SEQUENCE [LARGE SCALE GENOMIC DNA]</scope>
    <source>
        <strain>MR-4</strain>
    </source>
</reference>
<evidence type="ECO:0000255" key="1">
    <source>
        <dbReference type="HAMAP-Rule" id="MF_00117"/>
    </source>
</evidence>
<feature type="chain" id="PRO_1000015570" description="33 kDa chaperonin">
    <location>
        <begin position="1"/>
        <end position="286"/>
    </location>
</feature>
<feature type="disulfide bond" description="Redox-active" evidence="1">
    <location>
        <begin position="225"/>
        <end position="227"/>
    </location>
</feature>
<feature type="disulfide bond" description="Redox-active" evidence="1">
    <location>
        <begin position="258"/>
        <end position="261"/>
    </location>
</feature>
<accession>Q0HNY3</accession>
<name>HSLO_SHESM</name>
<keyword id="KW-0143">Chaperone</keyword>
<keyword id="KW-0963">Cytoplasm</keyword>
<keyword id="KW-1015">Disulfide bond</keyword>
<keyword id="KW-0676">Redox-active center</keyword>
<keyword id="KW-0862">Zinc</keyword>
<gene>
    <name evidence="1" type="primary">hslO</name>
    <name type="ordered locus">Shewmr4_0153</name>
</gene>
<dbReference type="EMBL" id="CP000446">
    <property type="protein sequence ID" value="ABI37234.1"/>
    <property type="molecule type" value="Genomic_DNA"/>
</dbReference>
<dbReference type="RefSeq" id="WP_011620986.1">
    <property type="nucleotide sequence ID" value="NC_008321.1"/>
</dbReference>
<dbReference type="SMR" id="Q0HNY3"/>
<dbReference type="KEGG" id="she:Shewmr4_0153"/>
<dbReference type="HOGENOM" id="CLU_054493_0_0_6"/>
<dbReference type="GO" id="GO:0005737">
    <property type="term" value="C:cytoplasm"/>
    <property type="evidence" value="ECO:0007669"/>
    <property type="project" value="UniProtKB-SubCell"/>
</dbReference>
<dbReference type="GO" id="GO:0044183">
    <property type="term" value="F:protein folding chaperone"/>
    <property type="evidence" value="ECO:0007669"/>
    <property type="project" value="TreeGrafter"/>
</dbReference>
<dbReference type="GO" id="GO:0051082">
    <property type="term" value="F:unfolded protein binding"/>
    <property type="evidence" value="ECO:0007669"/>
    <property type="project" value="UniProtKB-UniRule"/>
</dbReference>
<dbReference type="GO" id="GO:0042026">
    <property type="term" value="P:protein refolding"/>
    <property type="evidence" value="ECO:0007669"/>
    <property type="project" value="TreeGrafter"/>
</dbReference>
<dbReference type="CDD" id="cd00498">
    <property type="entry name" value="Hsp33"/>
    <property type="match status" value="1"/>
</dbReference>
<dbReference type="Gene3D" id="1.10.287.480">
    <property type="entry name" value="helix hairpin bin"/>
    <property type="match status" value="1"/>
</dbReference>
<dbReference type="Gene3D" id="3.55.30.10">
    <property type="entry name" value="Hsp33 domain"/>
    <property type="match status" value="1"/>
</dbReference>
<dbReference type="Gene3D" id="3.90.1280.10">
    <property type="entry name" value="HSP33 redox switch-like"/>
    <property type="match status" value="1"/>
</dbReference>
<dbReference type="HAMAP" id="MF_00117">
    <property type="entry name" value="HslO"/>
    <property type="match status" value="1"/>
</dbReference>
<dbReference type="InterPro" id="IPR000397">
    <property type="entry name" value="Heat_shock_Hsp33"/>
</dbReference>
<dbReference type="InterPro" id="IPR016154">
    <property type="entry name" value="Heat_shock_Hsp33_C"/>
</dbReference>
<dbReference type="InterPro" id="IPR016153">
    <property type="entry name" value="Heat_shock_Hsp33_N"/>
</dbReference>
<dbReference type="InterPro" id="IPR023212">
    <property type="entry name" value="Hsp33_helix_hairpin_bin_dom_sf"/>
</dbReference>
<dbReference type="NCBIfam" id="NF001033">
    <property type="entry name" value="PRK00114.1"/>
    <property type="match status" value="1"/>
</dbReference>
<dbReference type="PANTHER" id="PTHR30111">
    <property type="entry name" value="33 KDA CHAPERONIN"/>
    <property type="match status" value="1"/>
</dbReference>
<dbReference type="PANTHER" id="PTHR30111:SF1">
    <property type="entry name" value="33 KDA CHAPERONIN"/>
    <property type="match status" value="1"/>
</dbReference>
<dbReference type="Pfam" id="PF01430">
    <property type="entry name" value="HSP33"/>
    <property type="match status" value="1"/>
</dbReference>
<dbReference type="PIRSF" id="PIRSF005261">
    <property type="entry name" value="Heat_shock_Hsp33"/>
    <property type="match status" value="1"/>
</dbReference>
<dbReference type="SUPFAM" id="SSF64397">
    <property type="entry name" value="Hsp33 domain"/>
    <property type="match status" value="1"/>
</dbReference>
<dbReference type="SUPFAM" id="SSF118352">
    <property type="entry name" value="HSP33 redox switch-like"/>
    <property type="match status" value="1"/>
</dbReference>